<dbReference type="EC" id="7.-.-.-" evidence="1"/>
<dbReference type="EMBL" id="CP000253">
    <property type="protein sequence ID" value="ABD31501.1"/>
    <property type="molecule type" value="Genomic_DNA"/>
</dbReference>
<dbReference type="RefSeq" id="WP_000155386.1">
    <property type="nucleotide sequence ID" value="NZ_LS483365.1"/>
</dbReference>
<dbReference type="SMR" id="Q2FW35"/>
<dbReference type="STRING" id="93061.SAOUHSC_02482"/>
<dbReference type="PaxDb" id="1280-SAXN108_2471"/>
<dbReference type="KEGG" id="sao:SAOUHSC_02482"/>
<dbReference type="PATRIC" id="fig|93061.5.peg.2238"/>
<dbReference type="eggNOG" id="COG1122">
    <property type="taxonomic scope" value="Bacteria"/>
</dbReference>
<dbReference type="HOGENOM" id="CLU_000604_1_22_9"/>
<dbReference type="OrthoDB" id="9784332at2"/>
<dbReference type="PRO" id="PR:Q2FW35"/>
<dbReference type="Proteomes" id="UP000008816">
    <property type="component" value="Chromosome"/>
</dbReference>
<dbReference type="GO" id="GO:0043190">
    <property type="term" value="C:ATP-binding cassette (ABC) transporter complex"/>
    <property type="evidence" value="ECO:0000318"/>
    <property type="project" value="GO_Central"/>
</dbReference>
<dbReference type="GO" id="GO:0005524">
    <property type="term" value="F:ATP binding"/>
    <property type="evidence" value="ECO:0000318"/>
    <property type="project" value="GO_Central"/>
</dbReference>
<dbReference type="GO" id="GO:0016887">
    <property type="term" value="F:ATP hydrolysis activity"/>
    <property type="evidence" value="ECO:0007669"/>
    <property type="project" value="InterPro"/>
</dbReference>
<dbReference type="GO" id="GO:0042626">
    <property type="term" value="F:ATPase-coupled transmembrane transporter activity"/>
    <property type="evidence" value="ECO:0000318"/>
    <property type="project" value="GO_Central"/>
</dbReference>
<dbReference type="CDD" id="cd03225">
    <property type="entry name" value="ABC_cobalt_CbiO_domain1"/>
    <property type="match status" value="1"/>
</dbReference>
<dbReference type="FunFam" id="3.40.50.300:FF:000224">
    <property type="entry name" value="Energy-coupling factor transporter ATP-binding protein EcfA"/>
    <property type="match status" value="1"/>
</dbReference>
<dbReference type="Gene3D" id="3.40.50.300">
    <property type="entry name" value="P-loop containing nucleotide triphosphate hydrolases"/>
    <property type="match status" value="1"/>
</dbReference>
<dbReference type="InterPro" id="IPR003593">
    <property type="entry name" value="AAA+_ATPase"/>
</dbReference>
<dbReference type="InterPro" id="IPR003439">
    <property type="entry name" value="ABC_transporter-like_ATP-bd"/>
</dbReference>
<dbReference type="InterPro" id="IPR017871">
    <property type="entry name" value="ABC_transporter-like_CS"/>
</dbReference>
<dbReference type="InterPro" id="IPR015856">
    <property type="entry name" value="ABC_transpr_CbiO/EcfA_su"/>
</dbReference>
<dbReference type="InterPro" id="IPR050095">
    <property type="entry name" value="ECF_ABC_transporter_ATP-bd"/>
</dbReference>
<dbReference type="InterPro" id="IPR030946">
    <property type="entry name" value="EcfA2"/>
</dbReference>
<dbReference type="InterPro" id="IPR027417">
    <property type="entry name" value="P-loop_NTPase"/>
</dbReference>
<dbReference type="NCBIfam" id="TIGR04521">
    <property type="entry name" value="ECF_ATPase_2"/>
    <property type="match status" value="1"/>
</dbReference>
<dbReference type="NCBIfam" id="NF010166">
    <property type="entry name" value="PRK13646.1"/>
    <property type="match status" value="1"/>
</dbReference>
<dbReference type="PANTHER" id="PTHR43553:SF27">
    <property type="entry name" value="ENERGY-COUPLING FACTOR TRANSPORTER ATP-BINDING PROTEIN ECFA2"/>
    <property type="match status" value="1"/>
</dbReference>
<dbReference type="PANTHER" id="PTHR43553">
    <property type="entry name" value="HEAVY METAL TRANSPORTER"/>
    <property type="match status" value="1"/>
</dbReference>
<dbReference type="Pfam" id="PF00005">
    <property type="entry name" value="ABC_tran"/>
    <property type="match status" value="1"/>
</dbReference>
<dbReference type="SMART" id="SM00382">
    <property type="entry name" value="AAA"/>
    <property type="match status" value="1"/>
</dbReference>
<dbReference type="SUPFAM" id="SSF52540">
    <property type="entry name" value="P-loop containing nucleoside triphosphate hydrolases"/>
    <property type="match status" value="1"/>
</dbReference>
<dbReference type="PROSITE" id="PS00211">
    <property type="entry name" value="ABC_TRANSPORTER_1"/>
    <property type="match status" value="1"/>
</dbReference>
<dbReference type="PROSITE" id="PS50893">
    <property type="entry name" value="ABC_TRANSPORTER_2"/>
    <property type="match status" value="1"/>
</dbReference>
<dbReference type="PROSITE" id="PS51246">
    <property type="entry name" value="CBIO"/>
    <property type="match status" value="1"/>
</dbReference>
<protein>
    <recommendedName>
        <fullName evidence="1">Energy-coupling factor transporter ATP-binding protein EcfA2</fullName>
        <shortName evidence="1">ECF transporter A component EcfA2</shortName>
        <ecNumber evidence="1">7.-.-.-</ecNumber>
    </recommendedName>
</protein>
<keyword id="KW-0067">ATP-binding</keyword>
<keyword id="KW-1003">Cell membrane</keyword>
<keyword id="KW-0472">Membrane</keyword>
<keyword id="KW-0547">Nucleotide-binding</keyword>
<keyword id="KW-1185">Reference proteome</keyword>
<keyword id="KW-1278">Translocase</keyword>
<keyword id="KW-0813">Transport</keyword>
<proteinExistence type="inferred from homology"/>
<gene>
    <name evidence="1" type="primary">ecfA2</name>
    <name type="synonym">cbiO2</name>
    <name type="ordered locus">SAOUHSC_02482</name>
</gene>
<feature type="chain" id="PRO_0000287983" description="Energy-coupling factor transporter ATP-binding protein EcfA2">
    <location>
        <begin position="1"/>
        <end position="286"/>
    </location>
</feature>
<feature type="domain" description="ABC transporter" evidence="1">
    <location>
        <begin position="3"/>
        <end position="246"/>
    </location>
</feature>
<feature type="binding site" evidence="1">
    <location>
        <begin position="40"/>
        <end position="47"/>
    </location>
    <ligand>
        <name>ATP</name>
        <dbReference type="ChEBI" id="CHEBI:30616"/>
    </ligand>
</feature>
<name>ECFA2_STAA8</name>
<reference key="1">
    <citation type="book" date="2006" name="Gram positive pathogens, 2nd edition">
        <title>The Staphylococcus aureus NCTC 8325 genome.</title>
        <editorList>
            <person name="Fischetti V."/>
            <person name="Novick R."/>
            <person name="Ferretti J."/>
            <person name="Portnoy D."/>
            <person name="Rood J."/>
        </editorList>
        <authorList>
            <person name="Gillaspy A.F."/>
            <person name="Worrell V."/>
            <person name="Orvis J."/>
            <person name="Roe B.A."/>
            <person name="Dyer D.W."/>
            <person name="Iandolo J.J."/>
        </authorList>
    </citation>
    <scope>NUCLEOTIDE SEQUENCE [LARGE SCALE GENOMIC DNA]</scope>
    <source>
        <strain>NCTC 8325 / PS 47</strain>
    </source>
</reference>
<organism>
    <name type="scientific">Staphylococcus aureus (strain NCTC 8325 / PS 47)</name>
    <dbReference type="NCBI Taxonomy" id="93061"/>
    <lineage>
        <taxon>Bacteria</taxon>
        <taxon>Bacillati</taxon>
        <taxon>Bacillota</taxon>
        <taxon>Bacilli</taxon>
        <taxon>Bacillales</taxon>
        <taxon>Staphylococcaceae</taxon>
        <taxon>Staphylococcus</taxon>
    </lineage>
</organism>
<accession>Q2FW35</accession>
<sequence length="286" mass="32919">MTIRFDNVSYTYQKGTPYQHQAIHDVNTEFEQGKYYAIVGQTGSGKSTLIQNINALLKPTTGTVTVDDITITHKTKDKYIRPVRKRIGMVFQFPESQLFEDTVEREMIFGPKNFKMNLDEAKNYAHRLLMDLGFSRDVMSQSPFQMSGGQMRKIAIVSILAMNPDIIVVDEPTAGLDPQSKRQVMRLLKSLQTDENKAIILISHDMNEVARYADEVIVMKEGSIVSQTSPKELFKDKKKLADWHIGLPEIVQLQYDFEQKYQTKLKDIALTEEAFVSLYKEWQHEK</sequence>
<evidence type="ECO:0000255" key="1">
    <source>
        <dbReference type="HAMAP-Rule" id="MF_01710"/>
    </source>
</evidence>
<comment type="function">
    <text evidence="1">ATP-binding (A) component of a common energy-coupling factor (ECF) ABC-transporter complex. Unlike classic ABC transporters this ECF transporter provides the energy necessary to transport a number of different substrates.</text>
</comment>
<comment type="subunit">
    <text evidence="1">Forms a stable energy-coupling factor (ECF) transporter complex composed of 2 membrane-embedded substrate-binding proteins (S component), 2 ATP-binding proteins (A component) and 2 transmembrane proteins (T component).</text>
</comment>
<comment type="subcellular location">
    <subcellularLocation>
        <location evidence="1">Cell membrane</location>
        <topology evidence="1">Peripheral membrane protein</topology>
    </subcellularLocation>
</comment>
<comment type="similarity">
    <text evidence="1">Belongs to the ABC transporter superfamily. Energy-coupling factor EcfA family.</text>
</comment>